<keyword id="KW-0963">Cytoplasm</keyword>
<keyword id="KW-0378">Hydrolase</keyword>
<keyword id="KW-0694">RNA-binding</keyword>
<keyword id="KW-0820">tRNA-binding</keyword>
<proteinExistence type="inferred from homology"/>
<dbReference type="EC" id="3.1.1.29" evidence="1"/>
<dbReference type="EMBL" id="CP001099">
    <property type="protein sequence ID" value="ACF11661.1"/>
    <property type="molecule type" value="Genomic_DNA"/>
</dbReference>
<dbReference type="RefSeq" id="WP_012502494.1">
    <property type="nucleotide sequence ID" value="NC_011027.1"/>
</dbReference>
<dbReference type="SMR" id="B3QP08"/>
<dbReference type="STRING" id="517417.Cpar_1258"/>
<dbReference type="KEGG" id="cpc:Cpar_1258"/>
<dbReference type="eggNOG" id="COG0193">
    <property type="taxonomic scope" value="Bacteria"/>
</dbReference>
<dbReference type="HOGENOM" id="CLU_062456_4_1_10"/>
<dbReference type="OrthoDB" id="9800507at2"/>
<dbReference type="Proteomes" id="UP000008811">
    <property type="component" value="Chromosome"/>
</dbReference>
<dbReference type="GO" id="GO:0005737">
    <property type="term" value="C:cytoplasm"/>
    <property type="evidence" value="ECO:0007669"/>
    <property type="project" value="UniProtKB-SubCell"/>
</dbReference>
<dbReference type="GO" id="GO:0004045">
    <property type="term" value="F:peptidyl-tRNA hydrolase activity"/>
    <property type="evidence" value="ECO:0007669"/>
    <property type="project" value="UniProtKB-UniRule"/>
</dbReference>
<dbReference type="GO" id="GO:0000049">
    <property type="term" value="F:tRNA binding"/>
    <property type="evidence" value="ECO:0007669"/>
    <property type="project" value="UniProtKB-UniRule"/>
</dbReference>
<dbReference type="GO" id="GO:0006515">
    <property type="term" value="P:protein quality control for misfolded or incompletely synthesized proteins"/>
    <property type="evidence" value="ECO:0007669"/>
    <property type="project" value="UniProtKB-UniRule"/>
</dbReference>
<dbReference type="GO" id="GO:0072344">
    <property type="term" value="P:rescue of stalled ribosome"/>
    <property type="evidence" value="ECO:0007669"/>
    <property type="project" value="UniProtKB-UniRule"/>
</dbReference>
<dbReference type="CDD" id="cd00462">
    <property type="entry name" value="PTH"/>
    <property type="match status" value="1"/>
</dbReference>
<dbReference type="FunFam" id="3.40.50.1470:FF:000001">
    <property type="entry name" value="Peptidyl-tRNA hydrolase"/>
    <property type="match status" value="1"/>
</dbReference>
<dbReference type="Gene3D" id="3.40.50.1470">
    <property type="entry name" value="Peptidyl-tRNA hydrolase"/>
    <property type="match status" value="1"/>
</dbReference>
<dbReference type="HAMAP" id="MF_00083">
    <property type="entry name" value="Pept_tRNA_hydro_bact"/>
    <property type="match status" value="1"/>
</dbReference>
<dbReference type="InterPro" id="IPR001328">
    <property type="entry name" value="Pept_tRNA_hydro"/>
</dbReference>
<dbReference type="InterPro" id="IPR018171">
    <property type="entry name" value="Pept_tRNA_hydro_CS"/>
</dbReference>
<dbReference type="InterPro" id="IPR036416">
    <property type="entry name" value="Pept_tRNA_hydro_sf"/>
</dbReference>
<dbReference type="NCBIfam" id="TIGR00447">
    <property type="entry name" value="pth"/>
    <property type="match status" value="1"/>
</dbReference>
<dbReference type="PANTHER" id="PTHR17224">
    <property type="entry name" value="PEPTIDYL-TRNA HYDROLASE"/>
    <property type="match status" value="1"/>
</dbReference>
<dbReference type="PANTHER" id="PTHR17224:SF1">
    <property type="entry name" value="PEPTIDYL-TRNA HYDROLASE"/>
    <property type="match status" value="1"/>
</dbReference>
<dbReference type="Pfam" id="PF01195">
    <property type="entry name" value="Pept_tRNA_hydro"/>
    <property type="match status" value="1"/>
</dbReference>
<dbReference type="SUPFAM" id="SSF53178">
    <property type="entry name" value="Peptidyl-tRNA hydrolase-like"/>
    <property type="match status" value="1"/>
</dbReference>
<dbReference type="PROSITE" id="PS01195">
    <property type="entry name" value="PEPT_TRNA_HYDROL_1"/>
    <property type="match status" value="1"/>
</dbReference>
<name>PTH_CHLP8</name>
<feature type="chain" id="PRO_1000092923" description="Peptidyl-tRNA hydrolase">
    <location>
        <begin position="1"/>
        <end position="190"/>
    </location>
</feature>
<feature type="active site" description="Proton acceptor" evidence="1">
    <location>
        <position position="19"/>
    </location>
</feature>
<feature type="binding site" evidence="1">
    <location>
        <position position="14"/>
    </location>
    <ligand>
        <name>tRNA</name>
        <dbReference type="ChEBI" id="CHEBI:17843"/>
    </ligand>
</feature>
<feature type="binding site" evidence="1">
    <location>
        <position position="64"/>
    </location>
    <ligand>
        <name>tRNA</name>
        <dbReference type="ChEBI" id="CHEBI:17843"/>
    </ligand>
</feature>
<feature type="binding site" evidence="1">
    <location>
        <position position="66"/>
    </location>
    <ligand>
        <name>tRNA</name>
        <dbReference type="ChEBI" id="CHEBI:17843"/>
    </ligand>
</feature>
<feature type="binding site" evidence="1">
    <location>
        <position position="112"/>
    </location>
    <ligand>
        <name>tRNA</name>
        <dbReference type="ChEBI" id="CHEBI:17843"/>
    </ligand>
</feature>
<feature type="site" description="Discriminates between blocked and unblocked aminoacyl-tRNA" evidence="1">
    <location>
        <position position="9"/>
    </location>
</feature>
<feature type="site" description="Stabilizes the basic form of H active site to accept a proton" evidence="1">
    <location>
        <position position="91"/>
    </location>
</feature>
<sequence length="190" mass="21084">MKLIIGLGNPEPRYDGTRHNVGFEVVDRLASSFQAPFKAGKGKYHEAKCSHRGESLLLVRPTTYMNHSGQAVMAAMQFYKVKRQDMLVICDDLNLPVGTIRLRAKGSDGGQNGLKHIIQQMGTNEFSRLRIGIRKGDMPPGSFSSFVLGKFDEEERKVIDRVVETSADAVLDFALNGIEHAMTQFNKTVA</sequence>
<accession>B3QP08</accession>
<organism>
    <name type="scientific">Chlorobaculum parvum (strain DSM 263 / NCIMB 8327)</name>
    <name type="common">Chlorobium vibrioforme subsp. thiosulfatophilum</name>
    <dbReference type="NCBI Taxonomy" id="517417"/>
    <lineage>
        <taxon>Bacteria</taxon>
        <taxon>Pseudomonadati</taxon>
        <taxon>Chlorobiota</taxon>
        <taxon>Chlorobiia</taxon>
        <taxon>Chlorobiales</taxon>
        <taxon>Chlorobiaceae</taxon>
        <taxon>Chlorobaculum</taxon>
    </lineage>
</organism>
<evidence type="ECO:0000255" key="1">
    <source>
        <dbReference type="HAMAP-Rule" id="MF_00083"/>
    </source>
</evidence>
<gene>
    <name evidence="1" type="primary">pth</name>
    <name type="ordered locus">Cpar_1258</name>
</gene>
<protein>
    <recommendedName>
        <fullName evidence="1">Peptidyl-tRNA hydrolase</fullName>
        <shortName evidence="1">Pth</shortName>
        <ecNumber evidence="1">3.1.1.29</ecNumber>
    </recommendedName>
</protein>
<reference key="1">
    <citation type="submission" date="2008-06" db="EMBL/GenBank/DDBJ databases">
        <title>Complete sequence of Chlorobaculum parvum NCIB 8327.</title>
        <authorList>
            <consortium name="US DOE Joint Genome Institute"/>
            <person name="Lucas S."/>
            <person name="Copeland A."/>
            <person name="Lapidus A."/>
            <person name="Glavina del Rio T."/>
            <person name="Dalin E."/>
            <person name="Tice H."/>
            <person name="Bruce D."/>
            <person name="Goodwin L."/>
            <person name="Pitluck S."/>
            <person name="Schmutz J."/>
            <person name="Larimer F."/>
            <person name="Land M."/>
            <person name="Hauser L."/>
            <person name="Kyrpides N."/>
            <person name="Mikhailova N."/>
            <person name="Zhao F."/>
            <person name="Li T."/>
            <person name="Liu Z."/>
            <person name="Overmann J."/>
            <person name="Bryant D.A."/>
            <person name="Richardson P."/>
        </authorList>
    </citation>
    <scope>NUCLEOTIDE SEQUENCE [LARGE SCALE GENOMIC DNA]</scope>
    <source>
        <strain>DSM 263 / NCIMB 8327</strain>
    </source>
</reference>
<comment type="function">
    <text evidence="1">Hydrolyzes ribosome-free peptidyl-tRNAs (with 1 or more amino acids incorporated), which drop off the ribosome during protein synthesis, or as a result of ribosome stalling.</text>
</comment>
<comment type="function">
    <text evidence="1">Catalyzes the release of premature peptidyl moieties from peptidyl-tRNA molecules trapped in stalled 50S ribosomal subunits, and thus maintains levels of free tRNAs and 50S ribosomes.</text>
</comment>
<comment type="catalytic activity">
    <reaction evidence="1">
        <text>an N-acyl-L-alpha-aminoacyl-tRNA + H2O = an N-acyl-L-amino acid + a tRNA + H(+)</text>
        <dbReference type="Rhea" id="RHEA:54448"/>
        <dbReference type="Rhea" id="RHEA-COMP:10123"/>
        <dbReference type="Rhea" id="RHEA-COMP:13883"/>
        <dbReference type="ChEBI" id="CHEBI:15377"/>
        <dbReference type="ChEBI" id="CHEBI:15378"/>
        <dbReference type="ChEBI" id="CHEBI:59874"/>
        <dbReference type="ChEBI" id="CHEBI:78442"/>
        <dbReference type="ChEBI" id="CHEBI:138191"/>
        <dbReference type="EC" id="3.1.1.29"/>
    </reaction>
</comment>
<comment type="subunit">
    <text evidence="1">Monomer.</text>
</comment>
<comment type="subcellular location">
    <subcellularLocation>
        <location evidence="1">Cytoplasm</location>
    </subcellularLocation>
</comment>
<comment type="similarity">
    <text evidence="1">Belongs to the PTH family.</text>
</comment>